<gene>
    <name evidence="1" type="primary">frr</name>
    <name type="ordered locus">RHECIAT_CH0002013</name>
</gene>
<evidence type="ECO:0000255" key="1">
    <source>
        <dbReference type="HAMAP-Rule" id="MF_00040"/>
    </source>
</evidence>
<evidence type="ECO:0000256" key="2">
    <source>
        <dbReference type="SAM" id="MobiDB-lite"/>
    </source>
</evidence>
<accession>B3PYP5</accession>
<proteinExistence type="inferred from homology"/>
<feature type="chain" id="PRO_1000090774" description="Ribosome-recycling factor">
    <location>
        <begin position="1"/>
        <end position="186"/>
    </location>
</feature>
<feature type="region of interest" description="Disordered" evidence="2">
    <location>
        <begin position="144"/>
        <end position="163"/>
    </location>
</feature>
<name>RRF_RHIE6</name>
<organism>
    <name type="scientific">Rhizobium etli (strain CIAT 652)</name>
    <dbReference type="NCBI Taxonomy" id="491916"/>
    <lineage>
        <taxon>Bacteria</taxon>
        <taxon>Pseudomonadati</taxon>
        <taxon>Pseudomonadota</taxon>
        <taxon>Alphaproteobacteria</taxon>
        <taxon>Hyphomicrobiales</taxon>
        <taxon>Rhizobiaceae</taxon>
        <taxon>Rhizobium/Agrobacterium group</taxon>
        <taxon>Rhizobium</taxon>
    </lineage>
</organism>
<dbReference type="EMBL" id="CP001074">
    <property type="protein sequence ID" value="ACE90974.1"/>
    <property type="molecule type" value="Genomic_DNA"/>
</dbReference>
<dbReference type="SMR" id="B3PYP5"/>
<dbReference type="KEGG" id="rec:RHECIAT_CH0002013"/>
<dbReference type="eggNOG" id="COG0233">
    <property type="taxonomic scope" value="Bacteria"/>
</dbReference>
<dbReference type="HOGENOM" id="CLU_073981_2_0_5"/>
<dbReference type="Proteomes" id="UP000008817">
    <property type="component" value="Chromosome"/>
</dbReference>
<dbReference type="GO" id="GO:0005829">
    <property type="term" value="C:cytosol"/>
    <property type="evidence" value="ECO:0007669"/>
    <property type="project" value="GOC"/>
</dbReference>
<dbReference type="GO" id="GO:0043023">
    <property type="term" value="F:ribosomal large subunit binding"/>
    <property type="evidence" value="ECO:0007669"/>
    <property type="project" value="TreeGrafter"/>
</dbReference>
<dbReference type="GO" id="GO:0002184">
    <property type="term" value="P:cytoplasmic translational termination"/>
    <property type="evidence" value="ECO:0007669"/>
    <property type="project" value="TreeGrafter"/>
</dbReference>
<dbReference type="CDD" id="cd00520">
    <property type="entry name" value="RRF"/>
    <property type="match status" value="1"/>
</dbReference>
<dbReference type="FunFam" id="1.10.132.20:FF:000001">
    <property type="entry name" value="Ribosome-recycling factor"/>
    <property type="match status" value="1"/>
</dbReference>
<dbReference type="FunFam" id="3.30.1360.40:FF:000001">
    <property type="entry name" value="Ribosome-recycling factor"/>
    <property type="match status" value="1"/>
</dbReference>
<dbReference type="Gene3D" id="3.30.1360.40">
    <property type="match status" value="1"/>
</dbReference>
<dbReference type="Gene3D" id="1.10.132.20">
    <property type="entry name" value="Ribosome-recycling factor"/>
    <property type="match status" value="1"/>
</dbReference>
<dbReference type="HAMAP" id="MF_00040">
    <property type="entry name" value="RRF"/>
    <property type="match status" value="1"/>
</dbReference>
<dbReference type="InterPro" id="IPR002661">
    <property type="entry name" value="Ribosome_recyc_fac"/>
</dbReference>
<dbReference type="InterPro" id="IPR023584">
    <property type="entry name" value="Ribosome_recyc_fac_dom"/>
</dbReference>
<dbReference type="InterPro" id="IPR036191">
    <property type="entry name" value="RRF_sf"/>
</dbReference>
<dbReference type="NCBIfam" id="TIGR00496">
    <property type="entry name" value="frr"/>
    <property type="match status" value="1"/>
</dbReference>
<dbReference type="PANTHER" id="PTHR20982:SF3">
    <property type="entry name" value="MITOCHONDRIAL RIBOSOME RECYCLING FACTOR PSEUDO 1"/>
    <property type="match status" value="1"/>
</dbReference>
<dbReference type="PANTHER" id="PTHR20982">
    <property type="entry name" value="RIBOSOME RECYCLING FACTOR"/>
    <property type="match status" value="1"/>
</dbReference>
<dbReference type="Pfam" id="PF01765">
    <property type="entry name" value="RRF"/>
    <property type="match status" value="1"/>
</dbReference>
<dbReference type="SUPFAM" id="SSF55194">
    <property type="entry name" value="Ribosome recycling factor, RRF"/>
    <property type="match status" value="1"/>
</dbReference>
<sequence length="186" mass="20736">MSEGIDIKELKRRMDGAVSAFKSDIASLRTGRASANILDPVTIEAYGSRVPLNQVANITVPEPRMLTVSVWDKSMVSAVERGIRESNLGLNPIVDGQSLRIPLPELNEERRKSLVKVAHDYAEKSKVAIRHVRRDGMDGLKKAEKDGVIGQDESRAQSERVQKMTDETISEIDRLLGEKEKEIMQV</sequence>
<protein>
    <recommendedName>
        <fullName evidence="1">Ribosome-recycling factor</fullName>
        <shortName evidence="1">RRF</shortName>
    </recommendedName>
    <alternativeName>
        <fullName evidence="1">Ribosome-releasing factor</fullName>
    </alternativeName>
</protein>
<reference key="1">
    <citation type="journal article" date="2010" name="Appl. Environ. Microbiol.">
        <title>Conserved symbiotic plasmid DNA sequences in the multireplicon pangenomic structure of Rhizobium etli.</title>
        <authorList>
            <person name="Gonzalez V."/>
            <person name="Acosta J.L."/>
            <person name="Santamaria R.I."/>
            <person name="Bustos P."/>
            <person name="Fernandez J.L."/>
            <person name="Hernandez Gonzalez I.L."/>
            <person name="Diaz R."/>
            <person name="Flores M."/>
            <person name="Palacios R."/>
            <person name="Mora J."/>
            <person name="Davila G."/>
        </authorList>
    </citation>
    <scope>NUCLEOTIDE SEQUENCE [LARGE SCALE GENOMIC DNA]</scope>
    <source>
        <strain>CIAT 652</strain>
    </source>
</reference>
<comment type="function">
    <text evidence="1">Responsible for the release of ribosomes from messenger RNA at the termination of protein biosynthesis. May increase the efficiency of translation by recycling ribosomes from one round of translation to another.</text>
</comment>
<comment type="subcellular location">
    <subcellularLocation>
        <location evidence="1">Cytoplasm</location>
    </subcellularLocation>
</comment>
<comment type="similarity">
    <text evidence="1">Belongs to the RRF family.</text>
</comment>
<keyword id="KW-0963">Cytoplasm</keyword>
<keyword id="KW-0648">Protein biosynthesis</keyword>